<feature type="chain" id="PRO_0000262704" description="L(+)-tartrate dehydratase subunit beta">
    <location>
        <begin position="1"/>
        <end position="201"/>
    </location>
</feature>
<feature type="active site" evidence="2">
    <location>
        <position position="37"/>
    </location>
</feature>
<proteinExistence type="inferred from homology"/>
<sequence length="201" mass="22679">MKKILTTPIKAEDLQDIRVGDVIYLTGTLVTCRDVCHRRLIELKRPIPYDLNGKAIFHAGPIVRKNGDKWEMVSVGPTTSMRMESFEREFIEQTGVKLVVGKGGMGPLTEEGCQKFKALHVIFPAGCAVLAATQVEEIEEVHWTELGMPESLWVCRVKEFGPLIVSIDTHGNNLIAENKKLFAERRDPIVEEICEHVHYIK</sequence>
<accession>Q1R6R9</accession>
<name>TTDB_ECOUT</name>
<evidence type="ECO:0000250" key="1"/>
<evidence type="ECO:0000255" key="2"/>
<evidence type="ECO:0000305" key="3"/>
<protein>
    <recommendedName>
        <fullName>L(+)-tartrate dehydratase subunit beta</fullName>
        <shortName>L-TTD beta</shortName>
        <ecNumber>4.2.1.32</ecNumber>
    </recommendedName>
</protein>
<keyword id="KW-0456">Lyase</keyword>
<reference key="1">
    <citation type="journal article" date="2006" name="Proc. Natl. Acad. Sci. U.S.A.">
        <title>Identification of genes subject to positive selection in uropathogenic strains of Escherichia coli: a comparative genomics approach.</title>
        <authorList>
            <person name="Chen S.L."/>
            <person name="Hung C.-S."/>
            <person name="Xu J."/>
            <person name="Reigstad C.S."/>
            <person name="Magrini V."/>
            <person name="Sabo A."/>
            <person name="Blasiar D."/>
            <person name="Bieri T."/>
            <person name="Meyer R.R."/>
            <person name="Ozersky P."/>
            <person name="Armstrong J.R."/>
            <person name="Fulton R.S."/>
            <person name="Latreille J.P."/>
            <person name="Spieth J."/>
            <person name="Hooton T.M."/>
            <person name="Mardis E.R."/>
            <person name="Hultgren S.J."/>
            <person name="Gordon J.I."/>
        </authorList>
    </citation>
    <scope>NUCLEOTIDE SEQUENCE [LARGE SCALE GENOMIC DNA]</scope>
    <source>
        <strain>UTI89 / UPEC</strain>
    </source>
</reference>
<dbReference type="EC" id="4.2.1.32"/>
<dbReference type="EMBL" id="CP000243">
    <property type="protein sequence ID" value="ABE08945.1"/>
    <property type="molecule type" value="Genomic_DNA"/>
</dbReference>
<dbReference type="RefSeq" id="WP_000722957.1">
    <property type="nucleotide sequence ID" value="NZ_CP064825.1"/>
</dbReference>
<dbReference type="SMR" id="Q1R6R9"/>
<dbReference type="GeneID" id="86861212"/>
<dbReference type="KEGG" id="eci:UTI89_C3498"/>
<dbReference type="HOGENOM" id="CLU_098588_0_0_6"/>
<dbReference type="Proteomes" id="UP000001952">
    <property type="component" value="Chromosome"/>
</dbReference>
<dbReference type="GO" id="GO:0008730">
    <property type="term" value="F:L(+)-tartrate dehydratase activity"/>
    <property type="evidence" value="ECO:0007669"/>
    <property type="project" value="UniProtKB-EC"/>
</dbReference>
<dbReference type="FunFam" id="3.20.130.10:FF:000002">
    <property type="entry name" value="L(+)-tartrate dehydratase subunit beta"/>
    <property type="match status" value="1"/>
</dbReference>
<dbReference type="Gene3D" id="3.20.130.10">
    <property type="entry name" value="Fe-S hydro-lyase, tartrate dehydratase beta-type, catalytic domain"/>
    <property type="match status" value="1"/>
</dbReference>
<dbReference type="InterPro" id="IPR004647">
    <property type="entry name" value="Fe-S_hydro-lyase_TtdB-typ_cat"/>
</dbReference>
<dbReference type="InterPro" id="IPR036660">
    <property type="entry name" value="Fe-S_hydroAse_TtdB_cat_sf"/>
</dbReference>
<dbReference type="NCBIfam" id="NF006082">
    <property type="entry name" value="PRK08228.1"/>
    <property type="match status" value="1"/>
</dbReference>
<dbReference type="NCBIfam" id="TIGR00723">
    <property type="entry name" value="ttdB_fumA_fumB"/>
    <property type="match status" value="1"/>
</dbReference>
<dbReference type="PANTHER" id="PTHR43351">
    <property type="entry name" value="L(+)-TARTRATE DEHYDRATASE SUBUNIT BETA"/>
    <property type="match status" value="1"/>
</dbReference>
<dbReference type="PANTHER" id="PTHR43351:SF3">
    <property type="entry name" value="L(+)-TARTRATE DEHYDRATASE SUBUNIT BETA"/>
    <property type="match status" value="1"/>
</dbReference>
<dbReference type="Pfam" id="PF05683">
    <property type="entry name" value="Fumerase_C"/>
    <property type="match status" value="1"/>
</dbReference>
<dbReference type="SUPFAM" id="SSF117457">
    <property type="entry name" value="FumA C-terminal domain-like"/>
    <property type="match status" value="1"/>
</dbReference>
<organism>
    <name type="scientific">Escherichia coli (strain UTI89 / UPEC)</name>
    <dbReference type="NCBI Taxonomy" id="364106"/>
    <lineage>
        <taxon>Bacteria</taxon>
        <taxon>Pseudomonadati</taxon>
        <taxon>Pseudomonadota</taxon>
        <taxon>Gammaproteobacteria</taxon>
        <taxon>Enterobacterales</taxon>
        <taxon>Enterobacteriaceae</taxon>
        <taxon>Escherichia</taxon>
    </lineage>
</organism>
<gene>
    <name type="primary">ttdB</name>
    <name type="ordered locus">UTI89_C3498</name>
</gene>
<comment type="catalytic activity">
    <reaction>
        <text>(2R,3R)-tartrate = oxaloacetate + H2O</text>
        <dbReference type="Rhea" id="RHEA:15413"/>
        <dbReference type="ChEBI" id="CHEBI:15377"/>
        <dbReference type="ChEBI" id="CHEBI:16452"/>
        <dbReference type="ChEBI" id="CHEBI:30924"/>
        <dbReference type="EC" id="4.2.1.32"/>
    </reaction>
</comment>
<comment type="subunit">
    <text evidence="1">Heterotetramer of two alpha and two beta subunits.</text>
</comment>
<comment type="induction">
    <text evidence="1">Induced by tartrate, via TtdR.</text>
</comment>
<comment type="similarity">
    <text evidence="3">Belongs to the class-I fumarase family.</text>
</comment>